<dbReference type="EC" id="2.7.7.-"/>
<dbReference type="EC" id="3.1.21.-"/>
<dbReference type="EC" id="3.6.1.-"/>
<dbReference type="EMBL" id="AY094619">
    <property type="protein sequence ID" value="AAM21844.1"/>
    <property type="molecule type" value="Genomic_DNA"/>
</dbReference>
<dbReference type="EMBL" id="AY094619">
    <property type="protein sequence ID" value="AAM21845.1"/>
    <property type="molecule type" value="Genomic_DNA"/>
</dbReference>
<dbReference type="EMBL" id="AY094619">
    <property type="protein sequence ID" value="AAM21846.1"/>
    <property type="molecule type" value="Genomic_DNA"/>
</dbReference>
<dbReference type="EMBL" id="AY094619">
    <property type="protein sequence ID" value="AAM21847.1"/>
    <property type="molecule type" value="Genomic_DNA"/>
</dbReference>
<dbReference type="PDB" id="2HW0">
    <property type="method" value="NMR"/>
    <property type="chains" value="A=2-116"/>
</dbReference>
<dbReference type="PDB" id="6WDZ">
    <property type="method" value="X-ray"/>
    <property type="resolution" value="2.03 A"/>
    <property type="chains" value="A/D/G=2-116"/>
</dbReference>
<dbReference type="PDB" id="8H56">
    <property type="method" value="X-ray"/>
    <property type="resolution" value="2.33 A"/>
    <property type="chains" value="A/B=1-129"/>
</dbReference>
<dbReference type="PDB" id="8XMS">
    <property type="method" value="X-ray"/>
    <property type="resolution" value="2.20 A"/>
    <property type="chains" value="A/B/C/D/E/F=163-314"/>
</dbReference>
<dbReference type="PDBsum" id="2HW0"/>
<dbReference type="PDBsum" id="6WDZ"/>
<dbReference type="PDBsum" id="8H56"/>
<dbReference type="PDBsum" id="8XMS"/>
<dbReference type="BMRB" id="Q8BB16"/>
<dbReference type="SMR" id="Q8BB16"/>
<dbReference type="EvolutionaryTrace" id="Q8BB16"/>
<dbReference type="Proteomes" id="UP000000470">
    <property type="component" value="Genome"/>
</dbReference>
<dbReference type="GO" id="GO:0042025">
    <property type="term" value="C:host cell nucleus"/>
    <property type="evidence" value="ECO:0007669"/>
    <property type="project" value="UniProtKB-SubCell"/>
</dbReference>
<dbReference type="GO" id="GO:0005524">
    <property type="term" value="F:ATP binding"/>
    <property type="evidence" value="ECO:0007669"/>
    <property type="project" value="UniProtKB-KW"/>
</dbReference>
<dbReference type="GO" id="GO:0016887">
    <property type="term" value="F:ATP hydrolysis activity"/>
    <property type="evidence" value="ECO:0007669"/>
    <property type="project" value="RHEA"/>
</dbReference>
<dbReference type="GO" id="GO:0003677">
    <property type="term" value="F:DNA binding"/>
    <property type="evidence" value="ECO:0007669"/>
    <property type="project" value="UniProtKB-KW"/>
</dbReference>
<dbReference type="GO" id="GO:0004519">
    <property type="term" value="F:endonuclease activity"/>
    <property type="evidence" value="ECO:0007669"/>
    <property type="project" value="UniProtKB-KW"/>
</dbReference>
<dbReference type="GO" id="GO:0046872">
    <property type="term" value="F:metal ion binding"/>
    <property type="evidence" value="ECO:0007669"/>
    <property type="project" value="UniProtKB-KW"/>
</dbReference>
<dbReference type="GO" id="GO:0016779">
    <property type="term" value="F:nucleotidyltransferase activity"/>
    <property type="evidence" value="ECO:0007669"/>
    <property type="project" value="UniProtKB-KW"/>
</dbReference>
<dbReference type="GO" id="GO:0003723">
    <property type="term" value="F:RNA binding"/>
    <property type="evidence" value="ECO:0007669"/>
    <property type="project" value="InterPro"/>
</dbReference>
<dbReference type="GO" id="GO:0003724">
    <property type="term" value="F:RNA helicase activity"/>
    <property type="evidence" value="ECO:0007669"/>
    <property type="project" value="InterPro"/>
</dbReference>
<dbReference type="GO" id="GO:0006260">
    <property type="term" value="P:DNA replication"/>
    <property type="evidence" value="ECO:0007669"/>
    <property type="project" value="UniProtKB-KW"/>
</dbReference>
<dbReference type="GO" id="GO:0039684">
    <property type="term" value="P:rolling circle single-stranded viral DNA replication"/>
    <property type="evidence" value="ECO:0000314"/>
    <property type="project" value="UniProtKB"/>
</dbReference>
<dbReference type="FunFam" id="3.40.1310.20:FF:000003">
    <property type="entry name" value="Rep protein"/>
    <property type="match status" value="1"/>
</dbReference>
<dbReference type="Gene3D" id="3.40.1310.20">
    <property type="match status" value="1"/>
</dbReference>
<dbReference type="Gene3D" id="3.40.50.300">
    <property type="entry name" value="P-loop containing nucleotide triphosphate hydrolases"/>
    <property type="match status" value="1"/>
</dbReference>
<dbReference type="InterPro" id="IPR049912">
    <property type="entry name" value="CRESS_DNA_REP"/>
</dbReference>
<dbReference type="InterPro" id="IPR000605">
    <property type="entry name" value="Helicase_SF3_ssDNA/RNA_vir"/>
</dbReference>
<dbReference type="InterPro" id="IPR027417">
    <property type="entry name" value="P-loop_NTPase"/>
</dbReference>
<dbReference type="Pfam" id="PF00910">
    <property type="entry name" value="RNA_helicase"/>
    <property type="match status" value="1"/>
</dbReference>
<dbReference type="Pfam" id="PF02407">
    <property type="entry name" value="Viral_Rep"/>
    <property type="match status" value="1"/>
</dbReference>
<dbReference type="SUPFAM" id="SSF52540">
    <property type="entry name" value="P-loop containing nucleoside triphosphate hydrolases"/>
    <property type="match status" value="1"/>
</dbReference>
<dbReference type="PROSITE" id="PS52020">
    <property type="entry name" value="CRESS_DNA_REP"/>
    <property type="match status" value="1"/>
</dbReference>
<proteinExistence type="evidence at protein level"/>
<feature type="chain" id="PRO_0000133089" description="Replication-associated protein">
    <location>
        <begin position="1"/>
        <end position="314"/>
    </location>
</feature>
<feature type="domain" description="CRESS-DNA virus Rep endonuclease" evidence="4">
    <location>
        <begin position="11"/>
        <end position="110"/>
    </location>
</feature>
<feature type="region of interest" description="Disordered" evidence="5">
    <location>
        <begin position="1"/>
        <end position="29"/>
    </location>
</feature>
<feature type="short sequence motif" description="Nuclear localization signal" evidence="7">
    <location>
        <begin position="4"/>
        <end position="18"/>
    </location>
</feature>
<feature type="short sequence motif" description="RCR-1" evidence="4">
    <location>
        <begin position="18"/>
        <end position="21"/>
    </location>
</feature>
<feature type="short sequence motif" description="RCR-2" evidence="4">
    <location>
        <begin position="57"/>
        <end position="59"/>
    </location>
</feature>
<feature type="short sequence motif" description="RCR-3" evidence="4">
    <location>
        <begin position="96"/>
        <end position="99"/>
    </location>
</feature>
<feature type="active site" description="For DNA cleavage activity" evidence="4">
    <location>
        <position position="96"/>
    </location>
</feature>
<feature type="binding site" evidence="3">
    <location>
        <position position="48"/>
    </location>
    <ligand>
        <name>a divalent metal cation</name>
        <dbReference type="ChEBI" id="CHEBI:60240"/>
    </ligand>
</feature>
<feature type="binding site" evidence="3">
    <location>
        <position position="57"/>
    </location>
    <ligand>
        <name>a divalent metal cation</name>
        <dbReference type="ChEBI" id="CHEBI:60240"/>
    </ligand>
</feature>
<feature type="binding site" evidence="3">
    <location>
        <position position="100"/>
    </location>
    <ligand>
        <name>a divalent metal cation</name>
        <dbReference type="ChEBI" id="CHEBI:60240"/>
    </ligand>
</feature>
<feature type="binding site" evidence="2">
    <location>
        <begin position="174"/>
        <end position="181"/>
    </location>
    <ligand>
        <name>ATP</name>
        <dbReference type="ChEBI" id="CHEBI:30616"/>
    </ligand>
</feature>
<feature type="splice variant" id="VSP_015882" description="In isoform Rep3b." evidence="9">
    <location>
        <begin position="16"/>
        <end position="254"/>
    </location>
</feature>
<feature type="splice variant" id="VSP_015883" description="In isoform Rep3a." evidence="9">
    <location>
        <begin position="16"/>
        <end position="249"/>
    </location>
</feature>
<feature type="splice variant" id="VSP_015884" description="In isoform Rep'." evidence="9">
    <original>VSTLLESGSLVTVAEQHPVTFVRNFRGLAELLKVSGKMQKRDWKTNVHVIVGPPGC</original>
    <variation>YSDYQQSDPVGMVLLNCCPSCRSSLSEDYFLGILEECYRTIHGGRGPVRHPFPPMP</variation>
    <location>
        <begin position="123"/>
        <end position="178"/>
    </location>
</feature>
<feature type="splice variant" id="VSP_015885" description="In isoform Rep'." evidence="9">
    <location>
        <begin position="179"/>
        <end position="314"/>
    </location>
</feature>
<feature type="mutagenesis site" description="Complete loss of viral DNA synthesis." evidence="6">
    <original>GK</original>
    <variation>DI</variation>
    <location>
        <begin position="179"/>
        <end position="180"/>
    </location>
</feature>
<feature type="strand" evidence="12">
    <location>
        <begin position="8"/>
        <end position="11"/>
    </location>
</feature>
<feature type="strand" evidence="13">
    <location>
        <begin position="14"/>
        <end position="23"/>
    </location>
</feature>
<feature type="helix" evidence="13">
    <location>
        <begin position="26"/>
        <end position="33"/>
    </location>
</feature>
<feature type="helix" evidence="13">
    <location>
        <begin position="37"/>
        <end position="39"/>
    </location>
</feature>
<feature type="strand" evidence="13">
    <location>
        <begin position="40"/>
        <end position="48"/>
    </location>
</feature>
<feature type="strand" evidence="13">
    <location>
        <begin position="57"/>
        <end position="68"/>
    </location>
</feature>
<feature type="helix" evidence="13">
    <location>
        <begin position="70"/>
        <end position="77"/>
    </location>
</feature>
<feature type="turn" evidence="12">
    <location>
        <begin position="78"/>
        <end position="80"/>
    </location>
</feature>
<feature type="strand" evidence="13">
    <location>
        <begin position="82"/>
        <end position="85"/>
    </location>
</feature>
<feature type="helix" evidence="13">
    <location>
        <begin position="90"/>
        <end position="98"/>
    </location>
</feature>
<feature type="strand" evidence="13">
    <location>
        <begin position="103"/>
        <end position="108"/>
    </location>
</feature>
<feature type="helix" evidence="14">
    <location>
        <begin position="123"/>
        <end position="125"/>
    </location>
</feature>
<sequence length="314" mass="35762">MPSKKNGRSGPQPHKRWVFTLNNPSEDERKKIREPPISLFDYFIVGEEGNEEGRTPHLQGFANFVKKQTFNKVKWYLGARCHIEKAKGTDQQNKEYCSKEGNLLIECGAPRSQGQRSDLSTAVSTLLESGSLVTVAEQHPVTFVRNFRGLAELLKVSGKMQKRDWKTNVHVIVGPPGCGKSKWAANFADPETTYWKPPRNKWWDGYHGEEVVVIDDFYGWLPWDDLLRLCDRYPLTVETKGGTVPFLARSILITSNQTPLEWYSSTAVPAVEALYRRITSLVFWKNATEQSTEEGGQFVTLSPPCPEFPYEINY</sequence>
<organismHost>
    <name type="scientific">Sus scrofa</name>
    <name type="common">Pig</name>
    <dbReference type="NCBI Taxonomy" id="9823"/>
</organismHost>
<gene>
    <name type="primary">Rep</name>
    <name type="ORF">ORF1</name>
</gene>
<comment type="function">
    <text evidence="6 8">Essential for the replication of viral ssDNA. The closed circular ssDNA genome is first converted to a superhelical dsDNA. Rep and/or Rep' binds a specific hairpin at the genome origin of replication. Introduces an endonucleolytic nick within the conserved sequence 5'-AGTATTAC-3' in the intergenic region of the genome, thereby initiating the rolling circle replication (RCR). Following cleavage, binds covalently to the 5'-phosphate of DNA as a tyrosyl ester. The cleavage gives rise to a free 3'-OH that serves as a primer for the cellular DNA polymerase. The polymerase synthesizes the (+) strand DNA by rolling circle mechanism. After one round of replication, a Rep-catalyzed nucleotidyl transfer reaction releases a circular single-stranded virus genome, thereby terminating the replication. Displays origin-specific DNA cleavage, and nucleotidyl transferase.</text>
</comment>
<comment type="catalytic activity">
    <reaction>
        <text>ATP + H2O = ADP + phosphate + H(+)</text>
        <dbReference type="Rhea" id="RHEA:13065"/>
        <dbReference type="ChEBI" id="CHEBI:15377"/>
        <dbReference type="ChEBI" id="CHEBI:15378"/>
        <dbReference type="ChEBI" id="CHEBI:30616"/>
        <dbReference type="ChEBI" id="CHEBI:43474"/>
        <dbReference type="ChEBI" id="CHEBI:456216"/>
    </reaction>
</comment>
<comment type="cofactor">
    <cofactor evidence="11">
        <name>Mg(2+)</name>
        <dbReference type="ChEBI" id="CHEBI:18420"/>
    </cofactor>
    <cofactor evidence="11">
        <name>Mn(2+)</name>
        <dbReference type="ChEBI" id="CHEBI:29035"/>
    </cofactor>
    <text evidence="11">Divalent metal cations, possibly Mg(2+) or Mn(2+).</text>
</comment>
<comment type="subunit">
    <text evidence="1">Interacts with the capsid protein; this interaction relocates Rep into the nucleus.</text>
</comment>
<comment type="subcellular location">
    <subcellularLocation>
        <location evidence="7">Host nucleus</location>
    </subcellularLocation>
</comment>
<comment type="alternative products">
    <event type="alternative promoter"/>
    <event type="alternative splicing"/>
    <isoform>
        <id>Q8BB16-1</id>
        <name>Rep</name>
        <sequence type="displayed"/>
    </isoform>
    <isoform>
        <id>Q8BB16-2</id>
        <name>Rep'</name>
        <sequence type="described" ref="VSP_015884 VSP_015885"/>
    </isoform>
    <isoform>
        <id>Q8BB12-2</id>
        <name>NS462</name>
        <sequence type="external"/>
    </isoform>
    <isoform>
        <id>Q8BB12-3</id>
        <name>NS642</name>
        <sequence type="external"/>
    </isoform>
    <isoform>
        <id>Q8BB12-1</id>
        <name>NS0</name>
        <sequence type="external"/>
    </isoform>
    <isoform>
        <id>Q8BB16-6</id>
        <name>NS515</name>
        <sequence type="not described"/>
    </isoform>
    <isoform>
        <id>Q8BB16-7</id>
        <name>NS672</name>
        <sequence type="not described"/>
    </isoform>
    <isoform>
        <id>Q8BB16-3</id>
        <name>Rep3a</name>
        <sequence type="described" ref="VSP_015883"/>
    </isoform>
    <isoform>
        <id>Q8BB16-4</id>
        <name>Rep3b</name>
        <sequence type="described" ref="VSP_015882"/>
    </isoform>
    <isoform>
        <id>Q8BB16-5</id>
        <name>Rep3c</name>
        <sequence type="not described"/>
    </isoform>
</comment>
<comment type="domain">
    <text>There are 3 rolling circle replication (RCR) motifs. RCR-2 is probably involved in metal coordination. RCR-3 is required for phosphodiester bond cleavage for initiation of RCR.</text>
</comment>
<comment type="miscellaneous">
    <molecule>Isoform Rep</molecule>
    <text evidence="10">Produced by alternative promoter usage.</text>
</comment>
<comment type="miscellaneous">
    <molecule>Isoform Rep'</molecule>
    <text evidence="10">Produced by alternative splicing of isoform Rep.</text>
</comment>
<comment type="miscellaneous">
    <molecule>Isoform NS515</molecule>
    <text evidence="10">Produced by alternative promoter usage.</text>
</comment>
<comment type="miscellaneous">
    <molecule>Isoform NS672</molecule>
    <text evidence="10">Produced by alternative promoter usage.</text>
</comment>
<comment type="miscellaneous">
    <molecule>Isoform Rep3a</molecule>
    <text evidence="10">Produced by alternative splicing of isoform Rep.</text>
</comment>
<comment type="miscellaneous">
    <molecule>Isoform Rep3b</molecule>
    <text evidence="10">Produced by alternative splicing of isoform Rep.</text>
</comment>
<comment type="miscellaneous">
    <molecule>Isoform Rep3c</molecule>
    <text evidence="10">Produced by alternative splicing of isoform Rep.</text>
</comment>
<comment type="similarity">
    <text evidence="9">Belongs to the nanoviruses/circoviruses replication-associated protein family.</text>
</comment>
<evidence type="ECO:0000250" key="1"/>
<evidence type="ECO:0000250" key="2">
    <source>
        <dbReference type="UniProtKB" id="P27260"/>
    </source>
</evidence>
<evidence type="ECO:0000255" key="3"/>
<evidence type="ECO:0000255" key="4">
    <source>
        <dbReference type="PROSITE-ProRule" id="PRU01364"/>
    </source>
</evidence>
<evidence type="ECO:0000256" key="5">
    <source>
        <dbReference type="SAM" id="MobiDB-lite"/>
    </source>
</evidence>
<evidence type="ECO:0000269" key="6">
    <source>
    </source>
</evidence>
<evidence type="ECO:0000269" key="7">
    <source>
    </source>
</evidence>
<evidence type="ECO:0000269" key="8">
    <source>
    </source>
</evidence>
<evidence type="ECO:0000305" key="9"/>
<evidence type="ECO:0000305" key="10">
    <source>
    </source>
</evidence>
<evidence type="ECO:0000305" key="11">
    <source>
    </source>
</evidence>
<evidence type="ECO:0007829" key="12">
    <source>
        <dbReference type="PDB" id="2HW0"/>
    </source>
</evidence>
<evidence type="ECO:0007829" key="13">
    <source>
        <dbReference type="PDB" id="6WDZ"/>
    </source>
</evidence>
<evidence type="ECO:0007829" key="14">
    <source>
        <dbReference type="PDB" id="8H56"/>
    </source>
</evidence>
<keyword id="KW-0002">3D-structure</keyword>
<keyword id="KW-0877">Alternative promoter usage</keyword>
<keyword id="KW-0025">Alternative splicing</keyword>
<keyword id="KW-0067">ATP-binding</keyword>
<keyword id="KW-0190">Covalent protein-DNA linkage</keyword>
<keyword id="KW-0235">DNA replication</keyword>
<keyword id="KW-0238">DNA-binding</keyword>
<keyword id="KW-0255">Endonuclease</keyword>
<keyword id="KW-0347">Helicase</keyword>
<keyword id="KW-1048">Host nucleus</keyword>
<keyword id="KW-0378">Hydrolase</keyword>
<keyword id="KW-0479">Metal-binding</keyword>
<keyword id="KW-0511">Multifunctional enzyme</keyword>
<keyword id="KW-0540">Nuclease</keyword>
<keyword id="KW-0547">Nucleotide-binding</keyword>
<keyword id="KW-0548">Nucleotidyltransferase</keyword>
<keyword id="KW-1185">Reference proteome</keyword>
<keyword id="KW-0808">Transferase</keyword>
<protein>
    <recommendedName>
        <fullName>Replication-associated protein</fullName>
        <ecNumber>2.7.7.-</ecNumber>
        <ecNumber>3.1.21.-</ecNumber>
        <ecNumber>3.6.1.-</ecNumber>
    </recommendedName>
    <alternativeName>
        <fullName>ATP-dependent helicase Rep</fullName>
    </alternativeName>
    <alternativeName>
        <fullName>RepP</fullName>
    </alternativeName>
</protein>
<organism>
    <name type="scientific">Porcine circovirus 2</name>
    <name type="common">PCV2</name>
    <dbReference type="NCBI Taxonomy" id="85708"/>
    <lineage>
        <taxon>Viruses</taxon>
        <taxon>Monodnaviria</taxon>
        <taxon>Shotokuvirae</taxon>
        <taxon>Cressdnaviricota</taxon>
        <taxon>Arfiviricetes</taxon>
        <taxon>Cirlivirales</taxon>
        <taxon>Circoviridae</taxon>
        <taxon>Circovirus</taxon>
        <taxon>Circovirus porcine2</taxon>
    </lineage>
</organism>
<reference key="1">
    <citation type="journal article" date="2003" name="Virology">
        <title>Transcriptional analysis of porcine circovirus type 2.</title>
        <authorList>
            <person name="Cheung A.K."/>
        </authorList>
    </citation>
    <scope>NUCLEOTIDE SEQUENCE [GENOMIC DNA] (ISOFORMS REP; REP'; REP3A; REP3B AND REP3C)</scope>
    <scope>ALTERNATIVE PROMOTER USAGE</scope>
    <source>
        <strain>Isolate PCV/688</strain>
    </source>
</reference>
<reference key="2">
    <citation type="journal article" date="2003" name="Virology">
        <title>The essential and nonessential transcription units for viral protein synthesis and DNA replication of porcine circovirus type 2.</title>
        <authorList>
            <person name="Cheung A.K."/>
        </authorList>
    </citation>
    <scope>FUNCTION</scope>
    <scope>MUTAGENESIS OF 179-GLY-LYS-180</scope>
    <scope>ALTERNATIVE SPLICING</scope>
    <source>
        <strain>Isolate PCV/688</strain>
    </source>
</reference>
<reference key="3">
    <citation type="journal article" date="2009" name="Biochem. Biophys. Res. Commun.">
        <title>The N-terminus of porcine circovirus type 2 replication protein is required for nuclear localization and ori binding activities.</title>
        <authorList>
            <person name="Lin W.-L."/>
            <person name="Chien M.-S."/>
            <person name="Du Y.-W."/>
            <person name="Wu P.-C."/>
            <person name="Huang C."/>
        </authorList>
    </citation>
    <scope>SUBCELLULAR LOCATION</scope>
    <scope>NUCLEAR LOCALIZATION SIGNAL</scope>
</reference>
<reference key="4">
    <citation type="journal article" date="2014" name="Virus Genes">
        <title>Current understanding of genomic DNA of porcine circovirus type 2.</title>
        <authorList>
            <person name="Lv Q.Z."/>
            <person name="Guo K.K."/>
            <person name="Zhang Y.M."/>
        </authorList>
    </citation>
    <scope>REVIEW</scope>
</reference>
<reference key="5">
    <citation type="journal article" date="2015" name="Virology">
        <title>Specific functions of the Rep and Rep' proteins of porcine circovirus during copy-release and rolling-circle DNA replication.</title>
        <authorList>
            <person name="Cheung A.K."/>
        </authorList>
    </citation>
    <scope>FUNCTION</scope>
</reference>
<reference key="6">
    <citation type="journal article" date="2007" name="J. Mol. Biol.">
        <title>Solution structure, divalent metal and DNA binding of the endonuclease domain from the replication initiation protein from porcine circovirus 2.</title>
        <authorList>
            <person name="Vega-Rocha S."/>
            <person name="Byeon I.-J.L."/>
            <person name="Gronenborn B."/>
            <person name="Gronenborn A.M."/>
            <person name="Campos-Olivas R."/>
        </authorList>
    </citation>
    <scope>STRUCTURE BY NMR OF 1-116</scope>
    <scope>COFACTOR</scope>
    <scope>CHARACTERIZATION</scope>
</reference>
<accession>Q8BB16</accession>
<accession>Q8BB13</accession>
<accession>Q8BB14</accession>
<accession>Q8BB15</accession>
<name>REP_PCV2</name>